<gene>
    <name evidence="1" type="primary">pstB</name>
    <name type="ordered locus">Pcryo_2222</name>
</gene>
<dbReference type="EC" id="7.3.2.1" evidence="1"/>
<dbReference type="EMBL" id="CP000323">
    <property type="protein sequence ID" value="ABE75999.1"/>
    <property type="status" value="ALT_INIT"/>
    <property type="molecule type" value="Genomic_DNA"/>
</dbReference>
<dbReference type="SMR" id="Q1Q8K4"/>
<dbReference type="STRING" id="335284.Pcryo_2222"/>
<dbReference type="KEGG" id="pcr:Pcryo_2222"/>
<dbReference type="eggNOG" id="COG1117">
    <property type="taxonomic scope" value="Bacteria"/>
</dbReference>
<dbReference type="HOGENOM" id="CLU_000604_1_22_6"/>
<dbReference type="Proteomes" id="UP000002425">
    <property type="component" value="Chromosome"/>
</dbReference>
<dbReference type="GO" id="GO:0005886">
    <property type="term" value="C:plasma membrane"/>
    <property type="evidence" value="ECO:0007669"/>
    <property type="project" value="UniProtKB-SubCell"/>
</dbReference>
<dbReference type="GO" id="GO:0005524">
    <property type="term" value="F:ATP binding"/>
    <property type="evidence" value="ECO:0007669"/>
    <property type="project" value="UniProtKB-KW"/>
</dbReference>
<dbReference type="GO" id="GO:0016887">
    <property type="term" value="F:ATP hydrolysis activity"/>
    <property type="evidence" value="ECO:0007669"/>
    <property type="project" value="InterPro"/>
</dbReference>
<dbReference type="GO" id="GO:0015415">
    <property type="term" value="F:ATPase-coupled phosphate ion transmembrane transporter activity"/>
    <property type="evidence" value="ECO:0007669"/>
    <property type="project" value="UniProtKB-EC"/>
</dbReference>
<dbReference type="GO" id="GO:0035435">
    <property type="term" value="P:phosphate ion transmembrane transport"/>
    <property type="evidence" value="ECO:0007669"/>
    <property type="project" value="InterPro"/>
</dbReference>
<dbReference type="CDD" id="cd03260">
    <property type="entry name" value="ABC_PstB_phosphate_transporter"/>
    <property type="match status" value="1"/>
</dbReference>
<dbReference type="FunFam" id="3.40.50.300:FF:000132">
    <property type="entry name" value="Phosphate import ATP-binding protein PstB"/>
    <property type="match status" value="1"/>
</dbReference>
<dbReference type="Gene3D" id="3.40.50.300">
    <property type="entry name" value="P-loop containing nucleotide triphosphate hydrolases"/>
    <property type="match status" value="1"/>
</dbReference>
<dbReference type="InterPro" id="IPR003593">
    <property type="entry name" value="AAA+_ATPase"/>
</dbReference>
<dbReference type="InterPro" id="IPR003439">
    <property type="entry name" value="ABC_transporter-like_ATP-bd"/>
</dbReference>
<dbReference type="InterPro" id="IPR017871">
    <property type="entry name" value="ABC_transporter-like_CS"/>
</dbReference>
<dbReference type="InterPro" id="IPR027417">
    <property type="entry name" value="P-loop_NTPase"/>
</dbReference>
<dbReference type="InterPro" id="IPR005670">
    <property type="entry name" value="PstB-like"/>
</dbReference>
<dbReference type="NCBIfam" id="TIGR00972">
    <property type="entry name" value="3a0107s01c2"/>
    <property type="match status" value="1"/>
</dbReference>
<dbReference type="PANTHER" id="PTHR43423">
    <property type="entry name" value="ABC TRANSPORTER I FAMILY MEMBER 17"/>
    <property type="match status" value="1"/>
</dbReference>
<dbReference type="PANTHER" id="PTHR43423:SF3">
    <property type="entry name" value="PHOSPHATE IMPORT ATP-BINDING PROTEIN PSTB"/>
    <property type="match status" value="1"/>
</dbReference>
<dbReference type="Pfam" id="PF00005">
    <property type="entry name" value="ABC_tran"/>
    <property type="match status" value="1"/>
</dbReference>
<dbReference type="SMART" id="SM00382">
    <property type="entry name" value="AAA"/>
    <property type="match status" value="1"/>
</dbReference>
<dbReference type="SUPFAM" id="SSF52540">
    <property type="entry name" value="P-loop containing nucleoside triphosphate hydrolases"/>
    <property type="match status" value="1"/>
</dbReference>
<dbReference type="PROSITE" id="PS00211">
    <property type="entry name" value="ABC_TRANSPORTER_1"/>
    <property type="match status" value="1"/>
</dbReference>
<dbReference type="PROSITE" id="PS50893">
    <property type="entry name" value="ABC_TRANSPORTER_2"/>
    <property type="match status" value="1"/>
</dbReference>
<dbReference type="PROSITE" id="PS51238">
    <property type="entry name" value="PSTB"/>
    <property type="match status" value="1"/>
</dbReference>
<keyword id="KW-0067">ATP-binding</keyword>
<keyword id="KW-0997">Cell inner membrane</keyword>
<keyword id="KW-1003">Cell membrane</keyword>
<keyword id="KW-0472">Membrane</keyword>
<keyword id="KW-0547">Nucleotide-binding</keyword>
<keyword id="KW-0592">Phosphate transport</keyword>
<keyword id="KW-1278">Translocase</keyword>
<keyword id="KW-0813">Transport</keyword>
<reference key="1">
    <citation type="submission" date="2006-03" db="EMBL/GenBank/DDBJ databases">
        <title>Complete sequence of chromosome of Psychrobacter cryohalolentis K5.</title>
        <authorList>
            <consortium name="US DOE Joint Genome Institute"/>
            <person name="Copeland A."/>
            <person name="Lucas S."/>
            <person name="Lapidus A."/>
            <person name="Barry K."/>
            <person name="Detter J.C."/>
            <person name="Glavina T."/>
            <person name="Hammon N."/>
            <person name="Israni S."/>
            <person name="Dalin E."/>
            <person name="Tice H."/>
            <person name="Pitluck S."/>
            <person name="Brettin T."/>
            <person name="Bruce D."/>
            <person name="Han C."/>
            <person name="Tapia R."/>
            <person name="Sims D.R."/>
            <person name="Gilna P."/>
            <person name="Schmutz J."/>
            <person name="Larimer F."/>
            <person name="Land M."/>
            <person name="Hauser L."/>
            <person name="Kyrpides N."/>
            <person name="Kim E."/>
            <person name="Richardson P."/>
        </authorList>
    </citation>
    <scope>NUCLEOTIDE SEQUENCE [LARGE SCALE GENOMIC DNA]</scope>
    <source>
        <strain>ATCC BAA-1226 / DSM 17306 / VKM B-2378 / K5</strain>
    </source>
</reference>
<evidence type="ECO:0000255" key="1">
    <source>
        <dbReference type="HAMAP-Rule" id="MF_01702"/>
    </source>
</evidence>
<evidence type="ECO:0000305" key="2"/>
<comment type="function">
    <text evidence="1">Part of the ABC transporter complex PstSACB involved in phosphate import. Responsible for energy coupling to the transport system.</text>
</comment>
<comment type="catalytic activity">
    <reaction evidence="1">
        <text>phosphate(out) + ATP + H2O = ADP + 2 phosphate(in) + H(+)</text>
        <dbReference type="Rhea" id="RHEA:24440"/>
        <dbReference type="ChEBI" id="CHEBI:15377"/>
        <dbReference type="ChEBI" id="CHEBI:15378"/>
        <dbReference type="ChEBI" id="CHEBI:30616"/>
        <dbReference type="ChEBI" id="CHEBI:43474"/>
        <dbReference type="ChEBI" id="CHEBI:456216"/>
        <dbReference type="EC" id="7.3.2.1"/>
    </reaction>
</comment>
<comment type="subunit">
    <text evidence="1">The complex is composed of two ATP-binding proteins (PstB), two transmembrane proteins (PstC and PstA) and a solute-binding protein (PstS).</text>
</comment>
<comment type="subcellular location">
    <subcellularLocation>
        <location evidence="1">Cell inner membrane</location>
        <topology evidence="1">Peripheral membrane protein</topology>
    </subcellularLocation>
</comment>
<comment type="similarity">
    <text evidence="1">Belongs to the ABC transporter superfamily. Phosphate importer (TC 3.A.1.7) family.</text>
</comment>
<comment type="sequence caution" evidence="2">
    <conflict type="erroneous initiation">
        <sequence resource="EMBL-CDS" id="ABE75999"/>
    </conflict>
</comment>
<sequence>MPPAKMSIRDLNFYYGDFQALKNINIDIPDKKVTAFIGPSGCGKSTLLRTFNRMYDLYPGMRAEGNINLDGKNILGKDIDVNLLRAQVGMVFQKPTPFPMSIYDNVAFGVRLYEKLSKAEMDNRVEWALKKAALWLEVKDKLRASGLSLSGGQQQRLCIARGVATKPEVLLLDEPTSALDPISTGAIEELITDLKNDYTIAIVTHNMQQAARVSDYTAYMYLGDMVEMGETDQIFTNPAQKATEDYITGRYG</sequence>
<accession>Q1Q8K4</accession>
<name>PSTB_PSYCK</name>
<proteinExistence type="inferred from homology"/>
<protein>
    <recommendedName>
        <fullName evidence="1">Phosphate import ATP-binding protein PstB</fullName>
        <ecNumber evidence="1">7.3.2.1</ecNumber>
    </recommendedName>
    <alternativeName>
        <fullName evidence="1">ABC phosphate transporter</fullName>
    </alternativeName>
    <alternativeName>
        <fullName evidence="1">Phosphate-transporting ATPase</fullName>
    </alternativeName>
</protein>
<organism>
    <name type="scientific">Psychrobacter cryohalolentis (strain ATCC BAA-1226 / DSM 17306 / VKM B-2378 / K5)</name>
    <dbReference type="NCBI Taxonomy" id="335284"/>
    <lineage>
        <taxon>Bacteria</taxon>
        <taxon>Pseudomonadati</taxon>
        <taxon>Pseudomonadota</taxon>
        <taxon>Gammaproteobacteria</taxon>
        <taxon>Moraxellales</taxon>
        <taxon>Moraxellaceae</taxon>
        <taxon>Psychrobacter</taxon>
    </lineage>
</organism>
<feature type="chain" id="PRO_0000272504" description="Phosphate import ATP-binding protein PstB">
    <location>
        <begin position="1"/>
        <end position="252"/>
    </location>
</feature>
<feature type="domain" description="ABC transporter" evidence="1">
    <location>
        <begin position="6"/>
        <end position="247"/>
    </location>
</feature>
<feature type="binding site" evidence="1">
    <location>
        <begin position="38"/>
        <end position="45"/>
    </location>
    <ligand>
        <name>ATP</name>
        <dbReference type="ChEBI" id="CHEBI:30616"/>
    </ligand>
</feature>